<sequence>MKVGVIMGGISSEREISIQSGNSVVHALDKDKYEAIPIVLNEKEDLIEKVKGIDFALLALHGKFGEDGTVQSVLKTLGIPFSGCGPLSSAICMDKDMTKRILAFGNVRTARWVMVSSVDEIDYEKIENLGYPVFIKPNNGGSSVATTLVESKEAVKDAVLEALKYDTEVMIEEYIKGDEITCPIIDGKMLPVLAIKPKGKFFDIASKYEDGGADEFIVKLNEDLHKEVEKMALETYKLLKCDVYARVDMLVRDNVPYVLEVNTLPGMTKNSLFPKSAAGINMSFEELLDTIIEKSLKVNRE</sequence>
<gene>
    <name evidence="2" type="primary">ddl</name>
    <name type="ordered locus">CPR_1312</name>
</gene>
<proteinExistence type="inferred from homology"/>
<keyword id="KW-0067">ATP-binding</keyword>
<keyword id="KW-0133">Cell shape</keyword>
<keyword id="KW-0961">Cell wall biogenesis/degradation</keyword>
<keyword id="KW-0963">Cytoplasm</keyword>
<keyword id="KW-0436">Ligase</keyword>
<keyword id="KW-0460">Magnesium</keyword>
<keyword id="KW-0464">Manganese</keyword>
<keyword id="KW-0479">Metal-binding</keyword>
<keyword id="KW-0547">Nucleotide-binding</keyword>
<keyword id="KW-0573">Peptidoglycan synthesis</keyword>
<dbReference type="EC" id="6.3.2.4" evidence="2"/>
<dbReference type="EMBL" id="CP000312">
    <property type="protein sequence ID" value="ABG87786.1"/>
    <property type="molecule type" value="Genomic_DNA"/>
</dbReference>
<dbReference type="RefSeq" id="WP_011592293.1">
    <property type="nucleotide sequence ID" value="NC_008262.1"/>
</dbReference>
<dbReference type="SMR" id="Q0STC3"/>
<dbReference type="KEGG" id="cpr:CPR_1312"/>
<dbReference type="UniPathway" id="UPA00219"/>
<dbReference type="Proteomes" id="UP000001824">
    <property type="component" value="Chromosome"/>
</dbReference>
<dbReference type="GO" id="GO:0005737">
    <property type="term" value="C:cytoplasm"/>
    <property type="evidence" value="ECO:0007669"/>
    <property type="project" value="UniProtKB-SubCell"/>
</dbReference>
<dbReference type="GO" id="GO:0005524">
    <property type="term" value="F:ATP binding"/>
    <property type="evidence" value="ECO:0007669"/>
    <property type="project" value="UniProtKB-KW"/>
</dbReference>
<dbReference type="GO" id="GO:0008716">
    <property type="term" value="F:D-alanine-D-alanine ligase activity"/>
    <property type="evidence" value="ECO:0007669"/>
    <property type="project" value="UniProtKB-UniRule"/>
</dbReference>
<dbReference type="GO" id="GO:0046872">
    <property type="term" value="F:metal ion binding"/>
    <property type="evidence" value="ECO:0007669"/>
    <property type="project" value="UniProtKB-KW"/>
</dbReference>
<dbReference type="GO" id="GO:0071555">
    <property type="term" value="P:cell wall organization"/>
    <property type="evidence" value="ECO:0007669"/>
    <property type="project" value="UniProtKB-KW"/>
</dbReference>
<dbReference type="GO" id="GO:0009252">
    <property type="term" value="P:peptidoglycan biosynthetic process"/>
    <property type="evidence" value="ECO:0007669"/>
    <property type="project" value="UniProtKB-UniRule"/>
</dbReference>
<dbReference type="GO" id="GO:0008360">
    <property type="term" value="P:regulation of cell shape"/>
    <property type="evidence" value="ECO:0007669"/>
    <property type="project" value="UniProtKB-KW"/>
</dbReference>
<dbReference type="FunFam" id="3.40.50.20:FF:000031">
    <property type="entry name" value="D-alanine--D-alanine ligase"/>
    <property type="match status" value="1"/>
</dbReference>
<dbReference type="Gene3D" id="3.40.50.20">
    <property type="match status" value="1"/>
</dbReference>
<dbReference type="Gene3D" id="3.30.1490.20">
    <property type="entry name" value="ATP-grasp fold, A domain"/>
    <property type="match status" value="1"/>
</dbReference>
<dbReference type="Gene3D" id="3.30.470.20">
    <property type="entry name" value="ATP-grasp fold, B domain"/>
    <property type="match status" value="1"/>
</dbReference>
<dbReference type="HAMAP" id="MF_00047">
    <property type="entry name" value="Dala_Dala_lig"/>
    <property type="match status" value="1"/>
</dbReference>
<dbReference type="InterPro" id="IPR011761">
    <property type="entry name" value="ATP-grasp"/>
</dbReference>
<dbReference type="InterPro" id="IPR013815">
    <property type="entry name" value="ATP_grasp_subdomain_1"/>
</dbReference>
<dbReference type="InterPro" id="IPR000291">
    <property type="entry name" value="D-Ala_lig_Van_CS"/>
</dbReference>
<dbReference type="InterPro" id="IPR005905">
    <property type="entry name" value="D_ala_D_ala"/>
</dbReference>
<dbReference type="InterPro" id="IPR011095">
    <property type="entry name" value="Dala_Dala_lig_C"/>
</dbReference>
<dbReference type="InterPro" id="IPR011127">
    <property type="entry name" value="Dala_Dala_lig_N"/>
</dbReference>
<dbReference type="InterPro" id="IPR016185">
    <property type="entry name" value="PreATP-grasp_dom_sf"/>
</dbReference>
<dbReference type="NCBIfam" id="TIGR01205">
    <property type="entry name" value="D_ala_D_alaTIGR"/>
    <property type="match status" value="1"/>
</dbReference>
<dbReference type="NCBIfam" id="NF002378">
    <property type="entry name" value="PRK01372.1"/>
    <property type="match status" value="1"/>
</dbReference>
<dbReference type="PANTHER" id="PTHR23132">
    <property type="entry name" value="D-ALANINE--D-ALANINE LIGASE"/>
    <property type="match status" value="1"/>
</dbReference>
<dbReference type="PANTHER" id="PTHR23132:SF23">
    <property type="entry name" value="D-ALANINE--D-ALANINE LIGASE B"/>
    <property type="match status" value="1"/>
</dbReference>
<dbReference type="Pfam" id="PF07478">
    <property type="entry name" value="Dala_Dala_lig_C"/>
    <property type="match status" value="1"/>
</dbReference>
<dbReference type="Pfam" id="PF01820">
    <property type="entry name" value="Dala_Dala_lig_N"/>
    <property type="match status" value="1"/>
</dbReference>
<dbReference type="PIRSF" id="PIRSF039102">
    <property type="entry name" value="Ddl/VanB"/>
    <property type="match status" value="1"/>
</dbReference>
<dbReference type="SUPFAM" id="SSF56059">
    <property type="entry name" value="Glutathione synthetase ATP-binding domain-like"/>
    <property type="match status" value="1"/>
</dbReference>
<dbReference type="SUPFAM" id="SSF52440">
    <property type="entry name" value="PreATP-grasp domain"/>
    <property type="match status" value="1"/>
</dbReference>
<dbReference type="PROSITE" id="PS50975">
    <property type="entry name" value="ATP_GRASP"/>
    <property type="match status" value="1"/>
</dbReference>
<dbReference type="PROSITE" id="PS00843">
    <property type="entry name" value="DALA_DALA_LIGASE_1"/>
    <property type="match status" value="1"/>
</dbReference>
<dbReference type="PROSITE" id="PS00844">
    <property type="entry name" value="DALA_DALA_LIGASE_2"/>
    <property type="match status" value="1"/>
</dbReference>
<reference key="1">
    <citation type="journal article" date="2006" name="Genome Res.">
        <title>Skewed genomic variability in strains of the toxigenic bacterial pathogen, Clostridium perfringens.</title>
        <authorList>
            <person name="Myers G.S.A."/>
            <person name="Rasko D.A."/>
            <person name="Cheung J.K."/>
            <person name="Ravel J."/>
            <person name="Seshadri R."/>
            <person name="DeBoy R.T."/>
            <person name="Ren Q."/>
            <person name="Varga J."/>
            <person name="Awad M.M."/>
            <person name="Brinkac L.M."/>
            <person name="Daugherty S.C."/>
            <person name="Haft D.H."/>
            <person name="Dodson R.J."/>
            <person name="Madupu R."/>
            <person name="Nelson W.C."/>
            <person name="Rosovitz M.J."/>
            <person name="Sullivan S.A."/>
            <person name="Khouri H."/>
            <person name="Dimitrov G.I."/>
            <person name="Watkins K.L."/>
            <person name="Mulligan S."/>
            <person name="Benton J."/>
            <person name="Radune D."/>
            <person name="Fisher D.J."/>
            <person name="Atkins H.S."/>
            <person name="Hiscox T."/>
            <person name="Jost B.H."/>
            <person name="Billington S.J."/>
            <person name="Songer J.G."/>
            <person name="McClane B.A."/>
            <person name="Titball R.W."/>
            <person name="Rood J.I."/>
            <person name="Melville S.B."/>
            <person name="Paulsen I.T."/>
        </authorList>
    </citation>
    <scope>NUCLEOTIDE SEQUENCE [LARGE SCALE GENOMIC DNA]</scope>
    <source>
        <strain>SM101 / Type A</strain>
    </source>
</reference>
<organism>
    <name type="scientific">Clostridium perfringens (strain SM101 / Type A)</name>
    <dbReference type="NCBI Taxonomy" id="289380"/>
    <lineage>
        <taxon>Bacteria</taxon>
        <taxon>Bacillati</taxon>
        <taxon>Bacillota</taxon>
        <taxon>Clostridia</taxon>
        <taxon>Eubacteriales</taxon>
        <taxon>Clostridiaceae</taxon>
        <taxon>Clostridium</taxon>
    </lineage>
</organism>
<protein>
    <recommendedName>
        <fullName evidence="2">D-alanine--D-alanine ligase</fullName>
        <ecNumber evidence="2">6.3.2.4</ecNumber>
    </recommendedName>
    <alternativeName>
        <fullName evidence="2">D-Ala-D-Ala ligase</fullName>
    </alternativeName>
    <alternativeName>
        <fullName evidence="2">D-alanylalanine synthetase</fullName>
    </alternativeName>
</protein>
<comment type="function">
    <text evidence="2">Cell wall formation.</text>
</comment>
<comment type="catalytic activity">
    <reaction evidence="2">
        <text>2 D-alanine + ATP = D-alanyl-D-alanine + ADP + phosphate + H(+)</text>
        <dbReference type="Rhea" id="RHEA:11224"/>
        <dbReference type="ChEBI" id="CHEBI:15378"/>
        <dbReference type="ChEBI" id="CHEBI:30616"/>
        <dbReference type="ChEBI" id="CHEBI:43474"/>
        <dbReference type="ChEBI" id="CHEBI:57416"/>
        <dbReference type="ChEBI" id="CHEBI:57822"/>
        <dbReference type="ChEBI" id="CHEBI:456216"/>
        <dbReference type="EC" id="6.3.2.4"/>
    </reaction>
</comment>
<comment type="cofactor">
    <cofactor evidence="1">
        <name>Mg(2+)</name>
        <dbReference type="ChEBI" id="CHEBI:18420"/>
    </cofactor>
    <cofactor evidence="1">
        <name>Mn(2+)</name>
        <dbReference type="ChEBI" id="CHEBI:29035"/>
    </cofactor>
    <text evidence="1">Binds 2 magnesium or manganese ions per subunit.</text>
</comment>
<comment type="pathway">
    <text evidence="2">Cell wall biogenesis; peptidoglycan biosynthesis.</text>
</comment>
<comment type="subcellular location">
    <subcellularLocation>
        <location evidence="2">Cytoplasm</location>
    </subcellularLocation>
</comment>
<comment type="similarity">
    <text evidence="2">Belongs to the D-alanine--D-alanine ligase family.</text>
</comment>
<feature type="chain" id="PRO_1000030442" description="D-alanine--D-alanine ligase">
    <location>
        <begin position="1"/>
        <end position="301"/>
    </location>
</feature>
<feature type="domain" description="ATP-grasp" evidence="2">
    <location>
        <begin position="99"/>
        <end position="293"/>
    </location>
</feature>
<feature type="binding site" evidence="2">
    <location>
        <begin position="126"/>
        <end position="181"/>
    </location>
    <ligand>
        <name>ATP</name>
        <dbReference type="ChEBI" id="CHEBI:30616"/>
    </ligand>
</feature>
<feature type="binding site" evidence="2">
    <location>
        <position position="248"/>
    </location>
    <ligand>
        <name>Mg(2+)</name>
        <dbReference type="ChEBI" id="CHEBI:18420"/>
        <label>1</label>
    </ligand>
</feature>
<feature type="binding site" evidence="2">
    <location>
        <position position="260"/>
    </location>
    <ligand>
        <name>Mg(2+)</name>
        <dbReference type="ChEBI" id="CHEBI:18420"/>
        <label>1</label>
    </ligand>
</feature>
<feature type="binding site" evidence="2">
    <location>
        <position position="260"/>
    </location>
    <ligand>
        <name>Mg(2+)</name>
        <dbReference type="ChEBI" id="CHEBI:18420"/>
        <label>2</label>
    </ligand>
</feature>
<feature type="binding site" evidence="2">
    <location>
        <position position="262"/>
    </location>
    <ligand>
        <name>Mg(2+)</name>
        <dbReference type="ChEBI" id="CHEBI:18420"/>
        <label>2</label>
    </ligand>
</feature>
<evidence type="ECO:0000250" key="1"/>
<evidence type="ECO:0000255" key="2">
    <source>
        <dbReference type="HAMAP-Rule" id="MF_00047"/>
    </source>
</evidence>
<name>DDL_CLOPS</name>
<accession>Q0STC3</accession>